<name>AROC_VIBPA</name>
<reference key="1">
    <citation type="journal article" date="2003" name="Lancet">
        <title>Genome sequence of Vibrio parahaemolyticus: a pathogenic mechanism distinct from that of V. cholerae.</title>
        <authorList>
            <person name="Makino K."/>
            <person name="Oshima K."/>
            <person name="Kurokawa K."/>
            <person name="Yokoyama K."/>
            <person name="Uda T."/>
            <person name="Tagomori K."/>
            <person name="Iijima Y."/>
            <person name="Najima M."/>
            <person name="Nakano M."/>
            <person name="Yamashita A."/>
            <person name="Kubota Y."/>
            <person name="Kimura S."/>
            <person name="Yasunaga T."/>
            <person name="Honda T."/>
            <person name="Shinagawa H."/>
            <person name="Hattori M."/>
            <person name="Iida T."/>
        </authorList>
    </citation>
    <scope>NUCLEOTIDE SEQUENCE [LARGE SCALE GENOMIC DNA]</scope>
    <source>
        <strain>RIMD 2210633</strain>
    </source>
</reference>
<proteinExistence type="inferred from homology"/>
<dbReference type="EC" id="4.2.3.5" evidence="1"/>
<dbReference type="EMBL" id="BA000031">
    <property type="protein sequence ID" value="BAC60465.1"/>
    <property type="molecule type" value="Genomic_DNA"/>
</dbReference>
<dbReference type="RefSeq" id="NP_798581.1">
    <property type="nucleotide sequence ID" value="NC_004603.1"/>
</dbReference>
<dbReference type="RefSeq" id="WP_005479467.1">
    <property type="nucleotide sequence ID" value="NC_004603.1"/>
</dbReference>
<dbReference type="SMR" id="Q87MM9"/>
<dbReference type="GeneID" id="1189715"/>
<dbReference type="KEGG" id="vpa:VP2202"/>
<dbReference type="PATRIC" id="fig|223926.6.peg.2105"/>
<dbReference type="eggNOG" id="COG0082">
    <property type="taxonomic scope" value="Bacteria"/>
</dbReference>
<dbReference type="HOGENOM" id="CLU_034547_0_2_6"/>
<dbReference type="UniPathway" id="UPA00053">
    <property type="reaction ID" value="UER00090"/>
</dbReference>
<dbReference type="Proteomes" id="UP000002493">
    <property type="component" value="Chromosome 1"/>
</dbReference>
<dbReference type="GO" id="GO:0005829">
    <property type="term" value="C:cytosol"/>
    <property type="evidence" value="ECO:0007669"/>
    <property type="project" value="TreeGrafter"/>
</dbReference>
<dbReference type="GO" id="GO:0004107">
    <property type="term" value="F:chorismate synthase activity"/>
    <property type="evidence" value="ECO:0007669"/>
    <property type="project" value="UniProtKB-UniRule"/>
</dbReference>
<dbReference type="GO" id="GO:0010181">
    <property type="term" value="F:FMN binding"/>
    <property type="evidence" value="ECO:0007669"/>
    <property type="project" value="TreeGrafter"/>
</dbReference>
<dbReference type="GO" id="GO:0008652">
    <property type="term" value="P:amino acid biosynthetic process"/>
    <property type="evidence" value="ECO:0007669"/>
    <property type="project" value="UniProtKB-KW"/>
</dbReference>
<dbReference type="GO" id="GO:0009073">
    <property type="term" value="P:aromatic amino acid family biosynthetic process"/>
    <property type="evidence" value="ECO:0007669"/>
    <property type="project" value="UniProtKB-KW"/>
</dbReference>
<dbReference type="GO" id="GO:0009423">
    <property type="term" value="P:chorismate biosynthetic process"/>
    <property type="evidence" value="ECO:0007669"/>
    <property type="project" value="UniProtKB-UniRule"/>
</dbReference>
<dbReference type="CDD" id="cd07304">
    <property type="entry name" value="Chorismate_synthase"/>
    <property type="match status" value="1"/>
</dbReference>
<dbReference type="FunFam" id="3.60.150.10:FF:000001">
    <property type="entry name" value="Chorismate synthase"/>
    <property type="match status" value="1"/>
</dbReference>
<dbReference type="Gene3D" id="3.60.150.10">
    <property type="entry name" value="Chorismate synthase AroC"/>
    <property type="match status" value="1"/>
</dbReference>
<dbReference type="HAMAP" id="MF_00300">
    <property type="entry name" value="Chorismate_synth"/>
    <property type="match status" value="1"/>
</dbReference>
<dbReference type="InterPro" id="IPR000453">
    <property type="entry name" value="Chorismate_synth"/>
</dbReference>
<dbReference type="InterPro" id="IPR035904">
    <property type="entry name" value="Chorismate_synth_AroC_sf"/>
</dbReference>
<dbReference type="InterPro" id="IPR020541">
    <property type="entry name" value="Chorismate_synthase_CS"/>
</dbReference>
<dbReference type="NCBIfam" id="TIGR00033">
    <property type="entry name" value="aroC"/>
    <property type="match status" value="1"/>
</dbReference>
<dbReference type="NCBIfam" id="NF003793">
    <property type="entry name" value="PRK05382.1"/>
    <property type="match status" value="1"/>
</dbReference>
<dbReference type="PANTHER" id="PTHR21085">
    <property type="entry name" value="CHORISMATE SYNTHASE"/>
    <property type="match status" value="1"/>
</dbReference>
<dbReference type="PANTHER" id="PTHR21085:SF0">
    <property type="entry name" value="CHORISMATE SYNTHASE"/>
    <property type="match status" value="1"/>
</dbReference>
<dbReference type="Pfam" id="PF01264">
    <property type="entry name" value="Chorismate_synt"/>
    <property type="match status" value="1"/>
</dbReference>
<dbReference type="PIRSF" id="PIRSF001456">
    <property type="entry name" value="Chorismate_synth"/>
    <property type="match status" value="1"/>
</dbReference>
<dbReference type="SUPFAM" id="SSF103263">
    <property type="entry name" value="Chorismate synthase, AroC"/>
    <property type="match status" value="1"/>
</dbReference>
<dbReference type="PROSITE" id="PS00787">
    <property type="entry name" value="CHORISMATE_SYNTHASE_1"/>
    <property type="match status" value="1"/>
</dbReference>
<dbReference type="PROSITE" id="PS00788">
    <property type="entry name" value="CHORISMATE_SYNTHASE_2"/>
    <property type="match status" value="1"/>
</dbReference>
<dbReference type="PROSITE" id="PS00789">
    <property type="entry name" value="CHORISMATE_SYNTHASE_3"/>
    <property type="match status" value="1"/>
</dbReference>
<protein>
    <recommendedName>
        <fullName evidence="1">Chorismate synthase</fullName>
        <shortName evidence="1">CS</shortName>
        <ecNumber evidence="1">4.2.3.5</ecNumber>
    </recommendedName>
    <alternativeName>
        <fullName evidence="1">5-enolpyruvylshikimate-3-phosphate phospholyase</fullName>
    </alternativeName>
</protein>
<evidence type="ECO:0000255" key="1">
    <source>
        <dbReference type="HAMAP-Rule" id="MF_00300"/>
    </source>
</evidence>
<accession>Q87MM9</accession>
<feature type="chain" id="PRO_0000140674" description="Chorismate synthase">
    <location>
        <begin position="1"/>
        <end position="361"/>
    </location>
</feature>
<feature type="binding site" evidence="1">
    <location>
        <position position="48"/>
    </location>
    <ligand>
        <name>NADP(+)</name>
        <dbReference type="ChEBI" id="CHEBI:58349"/>
    </ligand>
</feature>
<feature type="binding site" evidence="1">
    <location>
        <position position="54"/>
    </location>
    <ligand>
        <name>NADP(+)</name>
        <dbReference type="ChEBI" id="CHEBI:58349"/>
    </ligand>
</feature>
<feature type="binding site" evidence="1">
    <location>
        <begin position="125"/>
        <end position="127"/>
    </location>
    <ligand>
        <name>FMN</name>
        <dbReference type="ChEBI" id="CHEBI:58210"/>
    </ligand>
</feature>
<feature type="binding site" evidence="1">
    <location>
        <begin position="238"/>
        <end position="239"/>
    </location>
    <ligand>
        <name>FMN</name>
        <dbReference type="ChEBI" id="CHEBI:58210"/>
    </ligand>
</feature>
<feature type="binding site" evidence="1">
    <location>
        <position position="278"/>
    </location>
    <ligand>
        <name>FMN</name>
        <dbReference type="ChEBI" id="CHEBI:58210"/>
    </ligand>
</feature>
<feature type="binding site" evidence="1">
    <location>
        <begin position="293"/>
        <end position="297"/>
    </location>
    <ligand>
        <name>FMN</name>
        <dbReference type="ChEBI" id="CHEBI:58210"/>
    </ligand>
</feature>
<feature type="binding site" evidence="1">
    <location>
        <position position="319"/>
    </location>
    <ligand>
        <name>FMN</name>
        <dbReference type="ChEBI" id="CHEBI:58210"/>
    </ligand>
</feature>
<keyword id="KW-0028">Amino-acid biosynthesis</keyword>
<keyword id="KW-0057">Aromatic amino acid biosynthesis</keyword>
<keyword id="KW-0274">FAD</keyword>
<keyword id="KW-0285">Flavoprotein</keyword>
<keyword id="KW-0288">FMN</keyword>
<keyword id="KW-0456">Lyase</keyword>
<keyword id="KW-0521">NADP</keyword>
<comment type="function">
    <text evidence="1">Catalyzes the anti-1,4-elimination of the C-3 phosphate and the C-6 proR hydrogen from 5-enolpyruvylshikimate-3-phosphate (EPSP) to yield chorismate, which is the branch point compound that serves as the starting substrate for the three terminal pathways of aromatic amino acid biosynthesis. This reaction introduces a second double bond into the aromatic ring system.</text>
</comment>
<comment type="catalytic activity">
    <reaction evidence="1">
        <text>5-O-(1-carboxyvinyl)-3-phosphoshikimate = chorismate + phosphate</text>
        <dbReference type="Rhea" id="RHEA:21020"/>
        <dbReference type="ChEBI" id="CHEBI:29748"/>
        <dbReference type="ChEBI" id="CHEBI:43474"/>
        <dbReference type="ChEBI" id="CHEBI:57701"/>
        <dbReference type="EC" id="4.2.3.5"/>
    </reaction>
</comment>
<comment type="cofactor">
    <cofactor evidence="1">
        <name>FMNH2</name>
        <dbReference type="ChEBI" id="CHEBI:57618"/>
    </cofactor>
    <text evidence="1">Reduced FMN (FMNH(2)).</text>
</comment>
<comment type="pathway">
    <text evidence="1">Metabolic intermediate biosynthesis; chorismate biosynthesis; chorismate from D-erythrose 4-phosphate and phosphoenolpyruvate: step 7/7.</text>
</comment>
<comment type="subunit">
    <text evidence="1">Homotetramer.</text>
</comment>
<comment type="similarity">
    <text evidence="1">Belongs to the chorismate synthase family.</text>
</comment>
<gene>
    <name evidence="1" type="primary">aroC</name>
    <name type="ordered locus">VP2202</name>
</gene>
<organism>
    <name type="scientific">Vibrio parahaemolyticus serotype O3:K6 (strain RIMD 2210633)</name>
    <dbReference type="NCBI Taxonomy" id="223926"/>
    <lineage>
        <taxon>Bacteria</taxon>
        <taxon>Pseudomonadati</taxon>
        <taxon>Pseudomonadota</taxon>
        <taxon>Gammaproteobacteria</taxon>
        <taxon>Vibrionales</taxon>
        <taxon>Vibrionaceae</taxon>
        <taxon>Vibrio</taxon>
    </lineage>
</organism>
<sequence>MAGNSIGQHFRVTTFGESHGIALGCIVDGCPPGLEITEADLQTDLDRRRPGTSRYTTQRREPDEVKILSGVFEGKTTGTSIGLLIENTDQRSKDYSDIKDKFRPGHADYTYHQKYGIRDYRGGGRSSARETAMRVAAGAIAKKYLKDEFGVEIRAYLSQMGDVSIDKVDWDEIENNAFFCPDADKVEAFDQLIRDLKKEGDSIGAKIQVVATNVPVGLGEPVFDRLDADIAHALMSINAVKGVEIGDGFDVVNQKGSQHRDPLSPQGFGSNHAGGILGGISTGQDIVANIALKPTSSITVPGDTITKEGEPTQLITKGRHDPCVGIRAVPIAEAMLAIVVMDHLLRHRGQNHGVTTETPKI</sequence>